<name>TRPC_THEP3</name>
<evidence type="ECO:0000255" key="1">
    <source>
        <dbReference type="HAMAP-Rule" id="MF_00134"/>
    </source>
</evidence>
<accession>B0K8T4</accession>
<keyword id="KW-0028">Amino-acid biosynthesis</keyword>
<keyword id="KW-0057">Aromatic amino acid biosynthesis</keyword>
<keyword id="KW-0210">Decarboxylase</keyword>
<keyword id="KW-0456">Lyase</keyword>
<keyword id="KW-1185">Reference proteome</keyword>
<keyword id="KW-0822">Tryptophan biosynthesis</keyword>
<organism>
    <name type="scientific">Thermoanaerobacter pseudethanolicus (strain ATCC 33223 / 39E)</name>
    <name type="common">Clostridium thermohydrosulfuricum</name>
    <dbReference type="NCBI Taxonomy" id="340099"/>
    <lineage>
        <taxon>Bacteria</taxon>
        <taxon>Bacillati</taxon>
        <taxon>Bacillota</taxon>
        <taxon>Clostridia</taxon>
        <taxon>Thermoanaerobacterales</taxon>
        <taxon>Thermoanaerobacteraceae</taxon>
        <taxon>Thermoanaerobacter</taxon>
    </lineage>
</organism>
<reference key="1">
    <citation type="submission" date="2008-01" db="EMBL/GenBank/DDBJ databases">
        <title>Complete sequence of Thermoanaerobacter pseudethanolicus 39E.</title>
        <authorList>
            <person name="Copeland A."/>
            <person name="Lucas S."/>
            <person name="Lapidus A."/>
            <person name="Barry K."/>
            <person name="Glavina del Rio T."/>
            <person name="Dalin E."/>
            <person name="Tice H."/>
            <person name="Pitluck S."/>
            <person name="Bruce D."/>
            <person name="Goodwin L."/>
            <person name="Saunders E."/>
            <person name="Brettin T."/>
            <person name="Detter J.C."/>
            <person name="Han C."/>
            <person name="Schmutz J."/>
            <person name="Larimer F."/>
            <person name="Land M."/>
            <person name="Hauser L."/>
            <person name="Kyrpides N."/>
            <person name="Lykidis A."/>
            <person name="Hemme C."/>
            <person name="Fields M.W."/>
            <person name="He Z."/>
            <person name="Zhou J."/>
            <person name="Richardson P."/>
        </authorList>
    </citation>
    <scope>NUCLEOTIDE SEQUENCE [LARGE SCALE GENOMIC DNA]</scope>
    <source>
        <strain>ATCC 33223 / DSM 2355 / 39E</strain>
    </source>
</reference>
<feature type="chain" id="PRO_1000095904" description="Indole-3-glycerol phosphate synthase">
    <location>
        <begin position="1"/>
        <end position="260"/>
    </location>
</feature>
<gene>
    <name evidence="1" type="primary">trpC</name>
    <name type="ordered locus">Teth39_0891</name>
</gene>
<comment type="catalytic activity">
    <reaction evidence="1">
        <text>1-(2-carboxyphenylamino)-1-deoxy-D-ribulose 5-phosphate + H(+) = (1S,2R)-1-C-(indol-3-yl)glycerol 3-phosphate + CO2 + H2O</text>
        <dbReference type="Rhea" id="RHEA:23476"/>
        <dbReference type="ChEBI" id="CHEBI:15377"/>
        <dbReference type="ChEBI" id="CHEBI:15378"/>
        <dbReference type="ChEBI" id="CHEBI:16526"/>
        <dbReference type="ChEBI" id="CHEBI:58613"/>
        <dbReference type="ChEBI" id="CHEBI:58866"/>
        <dbReference type="EC" id="4.1.1.48"/>
    </reaction>
</comment>
<comment type="pathway">
    <text evidence="1">Amino-acid biosynthesis; L-tryptophan biosynthesis; L-tryptophan from chorismate: step 4/5.</text>
</comment>
<comment type="similarity">
    <text evidence="1">Belongs to the TrpC family.</text>
</comment>
<dbReference type="EC" id="4.1.1.48" evidence="1"/>
<dbReference type="EMBL" id="CP000924">
    <property type="protein sequence ID" value="ABY94547.1"/>
    <property type="molecule type" value="Genomic_DNA"/>
</dbReference>
<dbReference type="RefSeq" id="WP_012269210.1">
    <property type="nucleotide sequence ID" value="NC_010321.1"/>
</dbReference>
<dbReference type="SMR" id="B0K8T4"/>
<dbReference type="STRING" id="340099.Teth39_0891"/>
<dbReference type="KEGG" id="tpd:Teth39_0891"/>
<dbReference type="eggNOG" id="COG0134">
    <property type="taxonomic scope" value="Bacteria"/>
</dbReference>
<dbReference type="HOGENOM" id="CLU_034247_2_0_9"/>
<dbReference type="UniPathway" id="UPA00035">
    <property type="reaction ID" value="UER00043"/>
</dbReference>
<dbReference type="Proteomes" id="UP000002156">
    <property type="component" value="Chromosome"/>
</dbReference>
<dbReference type="GO" id="GO:0004425">
    <property type="term" value="F:indole-3-glycerol-phosphate synthase activity"/>
    <property type="evidence" value="ECO:0007669"/>
    <property type="project" value="UniProtKB-UniRule"/>
</dbReference>
<dbReference type="GO" id="GO:0004640">
    <property type="term" value="F:phosphoribosylanthranilate isomerase activity"/>
    <property type="evidence" value="ECO:0007669"/>
    <property type="project" value="TreeGrafter"/>
</dbReference>
<dbReference type="GO" id="GO:0000162">
    <property type="term" value="P:L-tryptophan biosynthetic process"/>
    <property type="evidence" value="ECO:0007669"/>
    <property type="project" value="UniProtKB-UniRule"/>
</dbReference>
<dbReference type="CDD" id="cd00331">
    <property type="entry name" value="IGPS"/>
    <property type="match status" value="1"/>
</dbReference>
<dbReference type="FunFam" id="3.20.20.70:FF:000024">
    <property type="entry name" value="Indole-3-glycerol phosphate synthase"/>
    <property type="match status" value="1"/>
</dbReference>
<dbReference type="Gene3D" id="3.20.20.70">
    <property type="entry name" value="Aldolase class I"/>
    <property type="match status" value="1"/>
</dbReference>
<dbReference type="HAMAP" id="MF_00134_B">
    <property type="entry name" value="IGPS_B"/>
    <property type="match status" value="1"/>
</dbReference>
<dbReference type="InterPro" id="IPR013785">
    <property type="entry name" value="Aldolase_TIM"/>
</dbReference>
<dbReference type="InterPro" id="IPR045186">
    <property type="entry name" value="Indole-3-glycerol_P_synth"/>
</dbReference>
<dbReference type="InterPro" id="IPR013798">
    <property type="entry name" value="Indole-3-glycerol_P_synth_dom"/>
</dbReference>
<dbReference type="InterPro" id="IPR001468">
    <property type="entry name" value="Indole-3-GlycerolPSynthase_CS"/>
</dbReference>
<dbReference type="InterPro" id="IPR011060">
    <property type="entry name" value="RibuloseP-bd_barrel"/>
</dbReference>
<dbReference type="NCBIfam" id="NF001377">
    <property type="entry name" value="PRK00278.2-4"/>
    <property type="match status" value="1"/>
</dbReference>
<dbReference type="PANTHER" id="PTHR22854:SF2">
    <property type="entry name" value="INDOLE-3-GLYCEROL-PHOSPHATE SYNTHASE"/>
    <property type="match status" value="1"/>
</dbReference>
<dbReference type="PANTHER" id="PTHR22854">
    <property type="entry name" value="TRYPTOPHAN BIOSYNTHESIS PROTEIN"/>
    <property type="match status" value="1"/>
</dbReference>
<dbReference type="Pfam" id="PF00218">
    <property type="entry name" value="IGPS"/>
    <property type="match status" value="1"/>
</dbReference>
<dbReference type="SUPFAM" id="SSF51366">
    <property type="entry name" value="Ribulose-phoshate binding barrel"/>
    <property type="match status" value="1"/>
</dbReference>
<dbReference type="PROSITE" id="PS00614">
    <property type="entry name" value="IGPS"/>
    <property type="match status" value="1"/>
</dbReference>
<proteinExistence type="inferred from homology"/>
<protein>
    <recommendedName>
        <fullName evidence="1">Indole-3-glycerol phosphate synthase</fullName>
        <shortName evidence="1">IGPS</shortName>
        <ecNumber evidence="1">4.1.1.48</ecNumber>
    </recommendedName>
</protein>
<sequence>MVLDEIVRHKKKEVEEKKRIKPVEELINEIKGGYSGNFKKVLQKEGISIIGEIKKASPSKGIIKEDFDSVKIAKVYEKVDVDAISVLTEKEFFKGDDNYIREVKKVSSKPILRKDFIVDEYQIYESKILGADAVLLIVSVLGDKLRDFYNLSKSVGLDVLVEIHDRQQLEIALEAGCDIIGINNRDLKTFNVDINTTENLIKYIPQNTTIVSESGIKTPEDIRYLASLGVDAVLIGETFMKIIDDIDKISDFVKEAKGGG</sequence>